<gene>
    <name type="primary">YBL053</name>
    <name type="synonym">TOF1</name>
    <name type="ordered locus">CAALFM_C501460WA</name>
    <name type="ORF">CaO19.11613</name>
    <name type="ORF">CaO19.4136</name>
</gene>
<evidence type="ECO:0000250" key="1"/>
<evidence type="ECO:0000256" key="2">
    <source>
        <dbReference type="SAM" id="MobiDB-lite"/>
    </source>
</evidence>
<evidence type="ECO:0000305" key="3"/>
<feature type="chain" id="PRO_0000301733" description="Topoisomerase 1-associated factor 1">
    <location>
        <begin position="1"/>
        <end position="1263"/>
    </location>
</feature>
<feature type="region of interest" description="Disordered" evidence="2">
    <location>
        <begin position="1042"/>
        <end position="1098"/>
    </location>
</feature>
<feature type="region of interest" description="Disordered" evidence="2">
    <location>
        <begin position="1178"/>
        <end position="1263"/>
    </location>
</feature>
<feature type="compositionally biased region" description="Basic residues" evidence="2">
    <location>
        <begin position="1060"/>
        <end position="1071"/>
    </location>
</feature>
<feature type="compositionally biased region" description="Acidic residues" evidence="2">
    <location>
        <begin position="1179"/>
        <end position="1189"/>
    </location>
</feature>
<feature type="compositionally biased region" description="Polar residues" evidence="2">
    <location>
        <begin position="1211"/>
        <end position="1226"/>
    </location>
</feature>
<name>TOF1_CANAL</name>
<keyword id="KW-0131">Cell cycle</keyword>
<keyword id="KW-0227">DNA damage</keyword>
<keyword id="KW-0234">DNA repair</keyword>
<keyword id="KW-0236">DNA replication inhibitor</keyword>
<keyword id="KW-0469">Meiosis</keyword>
<keyword id="KW-0539">Nucleus</keyword>
<keyword id="KW-1185">Reference proteome</keyword>
<reference key="1">
    <citation type="journal article" date="2004" name="Proc. Natl. Acad. Sci. U.S.A.">
        <title>The diploid genome sequence of Candida albicans.</title>
        <authorList>
            <person name="Jones T."/>
            <person name="Federspiel N.A."/>
            <person name="Chibana H."/>
            <person name="Dungan J."/>
            <person name="Kalman S."/>
            <person name="Magee B.B."/>
            <person name="Newport G."/>
            <person name="Thorstenson Y.R."/>
            <person name="Agabian N."/>
            <person name="Magee P.T."/>
            <person name="Davis R.W."/>
            <person name="Scherer S."/>
        </authorList>
    </citation>
    <scope>NUCLEOTIDE SEQUENCE [LARGE SCALE GENOMIC DNA]</scope>
    <source>
        <strain>SC5314 / ATCC MYA-2876</strain>
    </source>
</reference>
<reference key="2">
    <citation type="journal article" date="2007" name="Genome Biol.">
        <title>Assembly of the Candida albicans genome into sixteen supercontigs aligned on the eight chromosomes.</title>
        <authorList>
            <person name="van het Hoog M."/>
            <person name="Rast T.J."/>
            <person name="Martchenko M."/>
            <person name="Grindle S."/>
            <person name="Dignard D."/>
            <person name="Hogues H."/>
            <person name="Cuomo C."/>
            <person name="Berriman M."/>
            <person name="Scherer S."/>
            <person name="Magee B.B."/>
            <person name="Whiteway M."/>
            <person name="Chibana H."/>
            <person name="Nantel A."/>
            <person name="Magee P.T."/>
        </authorList>
    </citation>
    <scope>GENOME REANNOTATION</scope>
    <source>
        <strain>SC5314 / ATCC MYA-2876</strain>
    </source>
</reference>
<reference key="3">
    <citation type="journal article" date="2013" name="Genome Biol.">
        <title>Assembly of a phased diploid Candida albicans genome facilitates allele-specific measurements and provides a simple model for repeat and indel structure.</title>
        <authorList>
            <person name="Muzzey D."/>
            <person name="Schwartz K."/>
            <person name="Weissman J.S."/>
            <person name="Sherlock G."/>
        </authorList>
    </citation>
    <scope>NUCLEOTIDE SEQUENCE [LARGE SCALE GENOMIC DNA]</scope>
    <scope>GENOME REANNOTATION</scope>
    <source>
        <strain>SC5314 / ATCC MYA-2876</strain>
    </source>
</reference>
<accession>Q59NW5</accession>
<accession>A0A1D8PN65</accession>
<accession>Q59NR6</accession>
<sequence>MSDYESGSDIDNYYEADEFDDFIEYSDNEVEQEKSKPTPGQIEVEEIEEPEEDRIRTLTTTLKPNETQAQKLLKAHISVLVSALGGPDHTSDIQPPPYKLGHDALACLKDIKRWIRAVDEKKNNYEVALACAESGLVTNDLIVIMCQWEDKMQKKEIIKNKTTTEKTMLACLELLVLLTWPVEFGKDLSESQKLLYSEIKKVHVSYKKQILMFNNGQLLKAAIRLVLPTIAKSRIDREPRDNQILKLVLYLIRNLLAIEPANLSISNKSRKGASVTASDLPLGVTQDDISINNVLSVFKKNKVLMLLLTISGSLGTEFDRDMFGEICLESIYLIIKGLSASEVLVKKNLGSTPVAAPSQNTVPDAINASQPLQPVTTTVGMQLQDLLATESKKKKIQTQNIASRHGRFGSLLSIRSADSNSFVVSGQEALINTDSSLAKLDKSKKWKDRTYFKYDSDEYVNTSTPVYLNLTGQDILYNFVEQFLSGGCFNNLIECMGSRLTSQTDLNMVDELTLASYFFTISWFLSYQRERIGLDSENKELNYGSVGAALSEVNFILIIGYFRDSFSVKKWNSLHVAMICFKELLQISNSVFGKEITNQTGEGDEISQHEIDRELAEGIIRKLFSFNDFLSIIVQIPQTAAKHSPDYLRVSVSVVHILLKAFETFANEDVHLYIQSKRKQSKRNRKRVNNLDKSTEDRLRDVIYASDEELDQSSAKEITQERKLDFKKTEARFFHQAIVSTYINYLSRYEDLSNQEIKTCLSYFHRLFVVRKDFTGLYRLDFMQLLQKLRNYLQRGSSLRLQVEEFIYYFMKKFKTAFERFPMPIEVLFPRFEDNECKVYLATGEVYEKEETTSTSRSPRLAKDLEFVRDFGLDDQIKILVSQLHVQEKQSLLKWLIQELERIINDRILNSDSIAELNASNQQRRLFINNGYLRFLLRIIGFDLPYTMEEVPELATTVDMEHLTKVTELIKKWDSSQPVIFEDDKVPSYFVRTREAGYDEDQYNENDQEYDFNDDSIAFETEANPNSNRNHVSELDHLEELERQLSSNGSRVNSKERNGTKGKARKKSKEKKRPEPKKVRGLKRRRIPKDLLDDDDSQHVVKSAEFVHDSDDESDDEKDKAFFEREEKMRNLLNDMGGIATSEQLKEIQKVWKNLETGGNNKVASTVAKAVKEVGLFVEESDNDDEVEEESRNSAPVNEEADRTIFESGEVDTQQDLSDNTSNTSDMESETETTKRSFVEDPEEISHVQPKRKRLVISDDEEE</sequence>
<protein>
    <recommendedName>
        <fullName>Topoisomerase 1-associated factor 1</fullName>
    </recommendedName>
</protein>
<organism>
    <name type="scientific">Candida albicans (strain SC5314 / ATCC MYA-2876)</name>
    <name type="common">Yeast</name>
    <dbReference type="NCBI Taxonomy" id="237561"/>
    <lineage>
        <taxon>Eukaryota</taxon>
        <taxon>Fungi</taxon>
        <taxon>Dikarya</taxon>
        <taxon>Ascomycota</taxon>
        <taxon>Saccharomycotina</taxon>
        <taxon>Pichiomycetes</taxon>
        <taxon>Debaryomycetaceae</taxon>
        <taxon>Candida/Lodderomyces clade</taxon>
        <taxon>Candida</taxon>
    </lineage>
</organism>
<dbReference type="EMBL" id="CP017627">
    <property type="protein sequence ID" value="AOW29579.1"/>
    <property type="molecule type" value="Genomic_DNA"/>
</dbReference>
<dbReference type="RefSeq" id="XP_711340.2">
    <property type="nucleotide sequence ID" value="XM_706248.2"/>
</dbReference>
<dbReference type="SMR" id="Q59NW5"/>
<dbReference type="BioGRID" id="1230086">
    <property type="interactions" value="1"/>
</dbReference>
<dbReference type="FunCoup" id="Q59NW5">
    <property type="interactions" value="65"/>
</dbReference>
<dbReference type="STRING" id="237561.Q59NW5"/>
<dbReference type="EnsemblFungi" id="C5_01460W_A-T">
    <property type="protein sequence ID" value="C5_01460W_A-T-p1"/>
    <property type="gene ID" value="C5_01460W_A"/>
</dbReference>
<dbReference type="GeneID" id="3647045"/>
<dbReference type="KEGG" id="cal:CAALFM_C501460WA"/>
<dbReference type="CGD" id="CAL0000201417">
    <property type="gene designation" value="YBL053"/>
</dbReference>
<dbReference type="VEuPathDB" id="FungiDB:C5_01460W_A"/>
<dbReference type="eggNOG" id="KOG1974">
    <property type="taxonomic scope" value="Eukaryota"/>
</dbReference>
<dbReference type="HOGENOM" id="CLU_008440_0_0_1"/>
<dbReference type="InParanoid" id="Q59NW5"/>
<dbReference type="OrthoDB" id="310853at2759"/>
<dbReference type="PRO" id="PR:Q59NW5"/>
<dbReference type="Proteomes" id="UP000000559">
    <property type="component" value="Chromosome 5"/>
</dbReference>
<dbReference type="GO" id="GO:0031298">
    <property type="term" value="C:replication fork protection complex"/>
    <property type="evidence" value="ECO:0000318"/>
    <property type="project" value="GO_Central"/>
</dbReference>
<dbReference type="GO" id="GO:0003677">
    <property type="term" value="F:DNA binding"/>
    <property type="evidence" value="ECO:0000318"/>
    <property type="project" value="GO_Central"/>
</dbReference>
<dbReference type="GO" id="GO:0006974">
    <property type="term" value="P:DNA damage response"/>
    <property type="evidence" value="ECO:0000316"/>
    <property type="project" value="CGD"/>
</dbReference>
<dbReference type="GO" id="GO:0006281">
    <property type="term" value="P:DNA repair"/>
    <property type="evidence" value="ECO:0000318"/>
    <property type="project" value="GO_Central"/>
</dbReference>
<dbReference type="GO" id="GO:0000076">
    <property type="term" value="P:DNA replication checkpoint signaling"/>
    <property type="evidence" value="ECO:0000318"/>
    <property type="project" value="GO_Central"/>
</dbReference>
<dbReference type="GO" id="GO:0051321">
    <property type="term" value="P:meiotic cell cycle"/>
    <property type="evidence" value="ECO:0007669"/>
    <property type="project" value="UniProtKB-KW"/>
</dbReference>
<dbReference type="GO" id="GO:0043111">
    <property type="term" value="P:replication fork arrest"/>
    <property type="evidence" value="ECO:0000318"/>
    <property type="project" value="GO_Central"/>
</dbReference>
<dbReference type="InterPro" id="IPR044998">
    <property type="entry name" value="Timeless"/>
</dbReference>
<dbReference type="InterPro" id="IPR006906">
    <property type="entry name" value="Timeless_N"/>
</dbReference>
<dbReference type="PANTHER" id="PTHR22940:SF4">
    <property type="entry name" value="PROTEIN TIMELESS HOMOLOG"/>
    <property type="match status" value="1"/>
</dbReference>
<dbReference type="PANTHER" id="PTHR22940">
    <property type="entry name" value="TIMEOUT/TIMELESS-2"/>
    <property type="match status" value="1"/>
</dbReference>
<dbReference type="Pfam" id="PF04821">
    <property type="entry name" value="TIMELESS"/>
    <property type="match status" value="1"/>
</dbReference>
<comment type="function">
    <text evidence="1">Forms a fork protection complex (FPC) with CSM3 and which is required for chromosome segregation during meiosis and DNA damage repair. FPC coordinates leading and lagging strand synthesis and moves with the replication fork. FPC stabilizes replication forks in a configuration that is recognized by replication checkpoint sensors (By similarity).</text>
</comment>
<comment type="subunit">
    <text evidence="1">Component of the fork protection complex (FPC) consisting of TOF1 and CSM3.</text>
</comment>
<comment type="subcellular location">
    <subcellularLocation>
        <location evidence="1">Nucleus</location>
    </subcellularLocation>
</comment>
<comment type="similarity">
    <text evidence="3">Belongs to the timeless family.</text>
</comment>
<proteinExistence type="inferred from homology"/>